<name>REPB_STAAU</name>
<comment type="function">
    <text>Produces a single-strand nick in a specific site of the plasmid, and this nick results in single-strand replication by rolling circle mechanism.</text>
</comment>
<comment type="similarity">
    <text evidence="2">Belongs to the Gram-positive plasmids replication protein type 1 family.</text>
</comment>
<comment type="sequence caution" evidence="2">
    <conflict type="erroneous initiation">
        <sequence resource="EMBL-CDS" id="AAA88362"/>
    </conflict>
</comment>
<comment type="sequence caution" evidence="2">
    <conflict type="erroneous initiation">
        <sequence resource="EMBL-CDS" id="AAA98215"/>
    </conflict>
</comment>
<sequence length="235" mass="27895">MKHGIQSQKVVAEVIKQKPTVRWLFLTLTVKNVYDGEELNKSLSDMAQGFRRMMQYKKINKNLVGFMRATEVTINNKDNSYNQHMHVLVCVEPTYFKNTENYVNQKQWIQFWKKAMKLDYDPNVKVQMIRPKNKYKSDIQSAIDETAKYPVKDTDFMTDDEEKNLKRLSDLEEGLHRKRLISYGGLLKEIHKKLNLDDTEEGDLIHTDDDEKADEDGFSIIAMWNWERKNYFIKE</sequence>
<organism>
    <name type="scientific">Staphylococcus aureus</name>
    <dbReference type="NCBI Taxonomy" id="1280"/>
    <lineage>
        <taxon>Bacteria</taxon>
        <taxon>Bacillati</taxon>
        <taxon>Bacillota</taxon>
        <taxon>Bacilli</taxon>
        <taxon>Bacillales</taxon>
        <taxon>Staphylococcaceae</taxon>
        <taxon>Staphylococcus</taxon>
    </lineage>
</organism>
<geneLocation type="plasmid">
    <name>pUB110</name>
</geneLocation>
<reference key="1">
    <citation type="journal article" date="1986" name="Genetika">
        <title>Nucleotide sequence and physical map of kanamycin-resistant plasmid pUB110 from Staphylococcus aureus.</title>
        <authorList>
            <person name="Bashkirov V.I."/>
            <person name="Mil'Shina N.V."/>
            <person name="Prozorov A.A."/>
        </authorList>
    </citation>
    <scope>NUCLEOTIDE SEQUENCE [GENOMIC DNA]</scope>
</reference>
<reference key="2">
    <citation type="journal article" date="1986" name="Mol. Gen. Genet.">
        <title>Complete nucleotide sequences of Bacillus plasmids pUB110dB, pRBH1 and its copy mutants.</title>
        <authorList>
            <person name="Mueller R.E."/>
            <person name="Ano T."/>
            <person name="Imanaka T."/>
            <person name="Aiba S."/>
        </authorList>
    </citation>
    <scope>NUCLEOTIDE SEQUENCE [GENOMIC DNA]</scope>
</reference>
<reference key="3">
    <citation type="journal article" date="1986" name="Plasmid">
        <title>The nucleotide sequence of pUB110: some salient features in relation to replication and its regulation.</title>
        <authorList>
            <person name="McKenzie T."/>
            <person name="Hoshino T."/>
            <person name="Tanaka T."/>
            <person name="Sueoka N."/>
        </authorList>
    </citation>
    <scope>NUCLEOTIDE SEQUENCE [GENOMIC DNA]</scope>
</reference>
<reference key="4">
    <citation type="journal article" date="1987" name="Plasmid">
        <title>Correction. A revision of the nucleotide sequence and functional map of pUB110.</title>
        <authorList>
            <person name="McKenzie T."/>
            <person name="Hoshino T."/>
            <person name="Tanaka T."/>
            <person name="Sueoka N."/>
        </authorList>
    </citation>
    <scope>SEQUENCE REVISION</scope>
</reference>
<accession>P0A0C3</accession>
<accession>P05061</accession>
<gene>
    <name type="primary">repB</name>
</gene>
<evidence type="ECO:0000250" key="1"/>
<evidence type="ECO:0000305" key="2"/>
<keyword id="KW-0235">DNA replication</keyword>
<keyword id="KW-0614">Plasmid</keyword>
<protein>
    <recommendedName>
        <fullName>Replication protein</fullName>
    </recommendedName>
</protein>
<dbReference type="EMBL" id="M37273">
    <property type="protein sequence ID" value="AAA98215.1"/>
    <property type="status" value="ALT_INIT"/>
    <property type="molecule type" value="Genomic_DNA"/>
</dbReference>
<dbReference type="EMBL" id="X03408">
    <property type="protein sequence ID" value="CAA27141.1"/>
    <property type="molecule type" value="Genomic_DNA"/>
</dbReference>
<dbReference type="EMBL" id="M19465">
    <property type="protein sequence ID" value="AAA88362.1"/>
    <property type="status" value="ALT_INIT"/>
    <property type="molecule type" value="Genomic_DNA"/>
</dbReference>
<dbReference type="RefSeq" id="NP_040434.1">
    <property type="nucleotide sequence ID" value="NC_001384.1"/>
</dbReference>
<dbReference type="GO" id="GO:0003677">
    <property type="term" value="F:DNA binding"/>
    <property type="evidence" value="ECO:0007669"/>
    <property type="project" value="InterPro"/>
</dbReference>
<dbReference type="GO" id="GO:0006260">
    <property type="term" value="P:DNA replication"/>
    <property type="evidence" value="ECO:0007669"/>
    <property type="project" value="UniProtKB-KW"/>
</dbReference>
<dbReference type="InterPro" id="IPR000989">
    <property type="entry name" value="Rep"/>
</dbReference>
<dbReference type="Pfam" id="PF01446">
    <property type="entry name" value="Rep_1"/>
    <property type="match status" value="1"/>
</dbReference>
<proteinExistence type="inferred from homology"/>
<feature type="chain" id="PRO_0000068317" description="Replication protein">
    <location>
        <begin position="1"/>
        <end position="235"/>
    </location>
</feature>
<feature type="binding site" evidence="1">
    <location>
        <position position="149"/>
    </location>
    <ligand>
        <name>DNA</name>
        <dbReference type="ChEBI" id="CHEBI:16991"/>
    </ligand>
</feature>